<evidence type="ECO:0000250" key="1"/>
<evidence type="ECO:0000305" key="2"/>
<protein>
    <recommendedName>
        <fullName>Acyl-CoA dehydrogenase fadE12</fullName>
        <ecNumber>1.3.99.-</ecNumber>
    </recommendedName>
</protein>
<name>ACDC_MYCBO</name>
<organism>
    <name type="scientific">Mycobacterium bovis (strain ATCC BAA-935 / AF2122/97)</name>
    <dbReference type="NCBI Taxonomy" id="233413"/>
    <lineage>
        <taxon>Bacteria</taxon>
        <taxon>Bacillati</taxon>
        <taxon>Actinomycetota</taxon>
        <taxon>Actinomycetes</taxon>
        <taxon>Mycobacteriales</taxon>
        <taxon>Mycobacteriaceae</taxon>
        <taxon>Mycobacterium</taxon>
        <taxon>Mycobacterium tuberculosis complex</taxon>
    </lineage>
</organism>
<dbReference type="EC" id="1.3.99.-"/>
<dbReference type="EMBL" id="LT708304">
    <property type="protein sequence ID" value="SIT99596.1"/>
    <property type="molecule type" value="Genomic_DNA"/>
</dbReference>
<dbReference type="RefSeq" id="NP_854654.1">
    <property type="nucleotide sequence ID" value="NC_002945.3"/>
</dbReference>
<dbReference type="RefSeq" id="WP_010950473.1">
    <property type="nucleotide sequence ID" value="NC_002945.4"/>
</dbReference>
<dbReference type="SMR" id="Q7U0Y2"/>
<dbReference type="KEGG" id="mbo:BQ2027_MB0997C"/>
<dbReference type="PATRIC" id="fig|233413.5.peg.1086"/>
<dbReference type="Proteomes" id="UP000001419">
    <property type="component" value="Chromosome"/>
</dbReference>
<dbReference type="GO" id="GO:0005737">
    <property type="term" value="C:cytoplasm"/>
    <property type="evidence" value="ECO:0007669"/>
    <property type="project" value="TreeGrafter"/>
</dbReference>
<dbReference type="GO" id="GO:0003995">
    <property type="term" value="F:acyl-CoA dehydrogenase activity"/>
    <property type="evidence" value="ECO:0007669"/>
    <property type="project" value="TreeGrafter"/>
</dbReference>
<dbReference type="GO" id="GO:0050660">
    <property type="term" value="F:flavin adenine dinucleotide binding"/>
    <property type="evidence" value="ECO:0007669"/>
    <property type="project" value="InterPro"/>
</dbReference>
<dbReference type="GO" id="GO:0033539">
    <property type="term" value="P:fatty acid beta-oxidation using acyl-CoA dehydrogenase"/>
    <property type="evidence" value="ECO:0007669"/>
    <property type="project" value="TreeGrafter"/>
</dbReference>
<dbReference type="CDD" id="cd00567">
    <property type="entry name" value="ACAD"/>
    <property type="match status" value="1"/>
</dbReference>
<dbReference type="FunFam" id="1.10.540.10:FF:000028">
    <property type="entry name" value="Acyl-CoA dehydrogenase fadE12"/>
    <property type="match status" value="1"/>
</dbReference>
<dbReference type="FunFam" id="1.20.140.10:FF:000012">
    <property type="entry name" value="Acyl-CoA dehydrogenase fadE12"/>
    <property type="match status" value="1"/>
</dbReference>
<dbReference type="FunFam" id="2.40.110.10:FF:000002">
    <property type="entry name" value="Acyl-CoA dehydrogenase fadE12"/>
    <property type="match status" value="1"/>
</dbReference>
<dbReference type="Gene3D" id="1.10.540.10">
    <property type="entry name" value="Acyl-CoA dehydrogenase/oxidase, N-terminal domain"/>
    <property type="match status" value="1"/>
</dbReference>
<dbReference type="Gene3D" id="2.40.110.10">
    <property type="entry name" value="Butyryl-CoA Dehydrogenase, subunit A, domain 2"/>
    <property type="match status" value="1"/>
</dbReference>
<dbReference type="Gene3D" id="1.20.140.10">
    <property type="entry name" value="Butyryl-CoA Dehydrogenase, subunit A, domain 3"/>
    <property type="match status" value="1"/>
</dbReference>
<dbReference type="InterPro" id="IPR050741">
    <property type="entry name" value="Acyl-CoA_dehydrogenase"/>
</dbReference>
<dbReference type="InterPro" id="IPR006091">
    <property type="entry name" value="Acyl-CoA_Oxase/DH_mid-dom"/>
</dbReference>
<dbReference type="InterPro" id="IPR046373">
    <property type="entry name" value="Acyl-CoA_Oxase/DH_mid-dom_sf"/>
</dbReference>
<dbReference type="InterPro" id="IPR036250">
    <property type="entry name" value="AcylCo_DH-like_C"/>
</dbReference>
<dbReference type="InterPro" id="IPR009075">
    <property type="entry name" value="AcylCo_DH/oxidase_C"/>
</dbReference>
<dbReference type="InterPro" id="IPR013786">
    <property type="entry name" value="AcylCoA_DH/ox_N"/>
</dbReference>
<dbReference type="InterPro" id="IPR037069">
    <property type="entry name" value="AcylCoA_DH/ox_N_sf"/>
</dbReference>
<dbReference type="InterPro" id="IPR009100">
    <property type="entry name" value="AcylCoA_DH/oxidase_NM_dom_sf"/>
</dbReference>
<dbReference type="PANTHER" id="PTHR48083:SF1">
    <property type="entry name" value="DEHYDROGENASE, PUTATIVE (AFU_ORTHOLOGUE AFUA_7G06510)-RELATED"/>
    <property type="match status" value="1"/>
</dbReference>
<dbReference type="PANTHER" id="PTHR48083">
    <property type="entry name" value="MEDIUM-CHAIN SPECIFIC ACYL-COA DEHYDROGENASE, MITOCHONDRIAL-RELATED"/>
    <property type="match status" value="1"/>
</dbReference>
<dbReference type="Pfam" id="PF00441">
    <property type="entry name" value="Acyl-CoA_dh_1"/>
    <property type="match status" value="1"/>
</dbReference>
<dbReference type="Pfam" id="PF02770">
    <property type="entry name" value="Acyl-CoA_dh_M"/>
    <property type="match status" value="1"/>
</dbReference>
<dbReference type="Pfam" id="PF02771">
    <property type="entry name" value="Acyl-CoA_dh_N"/>
    <property type="match status" value="1"/>
</dbReference>
<dbReference type="SUPFAM" id="SSF47203">
    <property type="entry name" value="Acyl-CoA dehydrogenase C-terminal domain-like"/>
    <property type="match status" value="1"/>
</dbReference>
<dbReference type="SUPFAM" id="SSF56645">
    <property type="entry name" value="Acyl-CoA dehydrogenase NM domain-like"/>
    <property type="match status" value="1"/>
</dbReference>
<reference key="1">
    <citation type="journal article" date="2003" name="Proc. Natl. Acad. Sci. U.S.A.">
        <title>The complete genome sequence of Mycobacterium bovis.</title>
        <authorList>
            <person name="Garnier T."/>
            <person name="Eiglmeier K."/>
            <person name="Camus J.-C."/>
            <person name="Medina N."/>
            <person name="Mansoor H."/>
            <person name="Pryor M."/>
            <person name="Duthoy S."/>
            <person name="Grondin S."/>
            <person name="Lacroix C."/>
            <person name="Monsempe C."/>
            <person name="Simon S."/>
            <person name="Harris B."/>
            <person name="Atkin R."/>
            <person name="Doggett J."/>
            <person name="Mayes R."/>
            <person name="Keating L."/>
            <person name="Wheeler P.R."/>
            <person name="Parkhill J."/>
            <person name="Barrell B.G."/>
            <person name="Cole S.T."/>
            <person name="Gordon S.V."/>
            <person name="Hewinson R.G."/>
        </authorList>
    </citation>
    <scope>NUCLEOTIDE SEQUENCE [LARGE SCALE GENOMIC DNA]</scope>
    <source>
        <strain>ATCC BAA-935 / AF2122/97</strain>
    </source>
</reference>
<reference key="2">
    <citation type="journal article" date="2017" name="Genome Announc.">
        <title>Updated reference genome sequence and annotation of Mycobacterium bovis AF2122/97.</title>
        <authorList>
            <person name="Malone K.M."/>
            <person name="Farrell D."/>
            <person name="Stuber T.P."/>
            <person name="Schubert O.T."/>
            <person name="Aebersold R."/>
            <person name="Robbe-Austerman S."/>
            <person name="Gordon S.V."/>
        </authorList>
    </citation>
    <scope>NUCLEOTIDE SEQUENCE [LARGE SCALE GENOMIC DNA]</scope>
    <scope>GENOME REANNOTATION</scope>
    <source>
        <strain>ATCC BAA-935 / AF2122/97</strain>
    </source>
</reference>
<gene>
    <name type="primary">fadE12</name>
    <name type="ordered locus">BQ2027_MB0997C</name>
</gene>
<sequence length="388" mass="41524">MTDTSFIESEERQALRKAVASWVANYGHEYYLDKARKHEHTSELWAEAGKLGFLGVNLPEEYGGGGAGMYELSLVMEEMAAAGSALLLMVVSPAINGTIIAKFGTDDQKKRWLPGIADGSLTMAFAITEPDAGSNSHKITTTARRDGSDWIIKGQKVFISGIDQAQAVLVVGRSEEAKTGKLRPALFVVPTDAPGFSYTPIEMELVSPERQFQVFLDDVRLPADALVGAEDAAIAHLFAGLNPERIMGAASAVGMGRFALGRAVDYVKTRKVWSTPIGAHQGLAHPLAQCHIEVELAKLMTQKAATLYDHGDDFGAAEAANMAKYAAAEASSRAVDQAVQSMGGNGLTKEYGVAAMMTSARLARIAPISREMVLNFVAQTSLGLPRSY</sequence>
<keyword id="KW-0274">FAD</keyword>
<keyword id="KW-0285">Flavoprotein</keyword>
<keyword id="KW-0560">Oxidoreductase</keyword>
<keyword id="KW-1185">Reference proteome</keyword>
<comment type="catalytic activity">
    <reaction>
        <text>a 2,3-saturated acyl-CoA + A = a 2,3-dehydroacyl-CoA + AH2</text>
        <dbReference type="Rhea" id="RHEA:48608"/>
        <dbReference type="ChEBI" id="CHEBI:13193"/>
        <dbReference type="ChEBI" id="CHEBI:17499"/>
        <dbReference type="ChEBI" id="CHEBI:60015"/>
        <dbReference type="ChEBI" id="CHEBI:65111"/>
    </reaction>
</comment>
<comment type="cofactor">
    <cofactor evidence="1">
        <name>FAD</name>
        <dbReference type="ChEBI" id="CHEBI:57692"/>
    </cofactor>
</comment>
<comment type="miscellaneous">
    <text>Maximum activity is obtained with n-octanol-CoA.</text>
</comment>
<comment type="similarity">
    <text evidence="2">Belongs to the acyl-CoA dehydrogenase family.</text>
</comment>
<accession>Q7U0Y2</accession>
<accession>A0A1R3XWZ6</accession>
<accession>X2BGF7</accession>
<proteinExistence type="inferred from homology"/>
<feature type="chain" id="PRO_0000201184" description="Acyl-CoA dehydrogenase fadE12">
    <location>
        <begin position="1"/>
        <end position="388"/>
    </location>
</feature>